<gene>
    <name type="ordered locus">BMA10229_A0046</name>
</gene>
<comment type="function">
    <text evidence="1">Binds to DNA and alters its conformation. May be involved in regulation of gene expression, nucleoid organization and DNA protection.</text>
</comment>
<comment type="subunit">
    <text evidence="1">Homodimer.</text>
</comment>
<comment type="subcellular location">
    <subcellularLocation>
        <location evidence="1">Cytoplasm</location>
        <location evidence="1">Nucleoid</location>
    </subcellularLocation>
</comment>
<comment type="similarity">
    <text evidence="1">Belongs to the YbaB/EbfC family.</text>
</comment>
<keyword id="KW-0963">Cytoplasm</keyword>
<keyword id="KW-0238">DNA-binding</keyword>
<evidence type="ECO:0000255" key="1">
    <source>
        <dbReference type="HAMAP-Rule" id="MF_00274"/>
    </source>
</evidence>
<evidence type="ECO:0000256" key="2">
    <source>
        <dbReference type="SAM" id="MobiDB-lite"/>
    </source>
</evidence>
<protein>
    <recommendedName>
        <fullName evidence="1">Nucleoid-associated protein BMA10229_A0046</fullName>
    </recommendedName>
</protein>
<proteinExistence type="inferred from homology"/>
<feature type="chain" id="PRO_1000003703" description="Nucleoid-associated protein BMA10229_A0046">
    <location>
        <begin position="1"/>
        <end position="108"/>
    </location>
</feature>
<feature type="region of interest" description="Disordered" evidence="2">
    <location>
        <begin position="84"/>
        <end position="108"/>
    </location>
</feature>
<feature type="compositionally biased region" description="Polar residues" evidence="2">
    <location>
        <begin position="85"/>
        <end position="95"/>
    </location>
</feature>
<feature type="compositionally biased region" description="Pro residues" evidence="2">
    <location>
        <begin position="99"/>
        <end position="108"/>
    </location>
</feature>
<sequence>MMKGQLAGLMKQAQQMQENMKKMQEQLALIEVEGQSGAGLVKVTMTCRNEVRRVAIDPSLLADDKDMLEDLVAAAFNDAVRKAEATSQEKMSGMTSGLPLPPGFKLPF</sequence>
<accession>A2S286</accession>
<dbReference type="EMBL" id="CP000546">
    <property type="protein sequence ID" value="ABN02778.1"/>
    <property type="molecule type" value="Genomic_DNA"/>
</dbReference>
<dbReference type="RefSeq" id="WP_004192342.1">
    <property type="nucleotide sequence ID" value="NC_008836.1"/>
</dbReference>
<dbReference type="SMR" id="A2S286"/>
<dbReference type="KEGG" id="bml:BMA10229_A0046"/>
<dbReference type="HOGENOM" id="CLU_140930_0_0_4"/>
<dbReference type="Proteomes" id="UP000002283">
    <property type="component" value="Chromosome I"/>
</dbReference>
<dbReference type="GO" id="GO:0043590">
    <property type="term" value="C:bacterial nucleoid"/>
    <property type="evidence" value="ECO:0007669"/>
    <property type="project" value="UniProtKB-UniRule"/>
</dbReference>
<dbReference type="GO" id="GO:0005829">
    <property type="term" value="C:cytosol"/>
    <property type="evidence" value="ECO:0007669"/>
    <property type="project" value="TreeGrafter"/>
</dbReference>
<dbReference type="GO" id="GO:0003677">
    <property type="term" value="F:DNA binding"/>
    <property type="evidence" value="ECO:0007669"/>
    <property type="project" value="UniProtKB-UniRule"/>
</dbReference>
<dbReference type="FunFam" id="3.30.1310.10:FF:000001">
    <property type="entry name" value="Nucleoid-associated protein YbaB"/>
    <property type="match status" value="1"/>
</dbReference>
<dbReference type="Gene3D" id="3.30.1310.10">
    <property type="entry name" value="Nucleoid-associated protein YbaB-like domain"/>
    <property type="match status" value="1"/>
</dbReference>
<dbReference type="HAMAP" id="MF_00274">
    <property type="entry name" value="DNA_YbaB_EbfC"/>
    <property type="match status" value="1"/>
</dbReference>
<dbReference type="InterPro" id="IPR036894">
    <property type="entry name" value="YbaB-like_sf"/>
</dbReference>
<dbReference type="InterPro" id="IPR004401">
    <property type="entry name" value="YbaB/EbfC"/>
</dbReference>
<dbReference type="NCBIfam" id="TIGR00103">
    <property type="entry name" value="DNA_YbaB_EbfC"/>
    <property type="match status" value="1"/>
</dbReference>
<dbReference type="PANTHER" id="PTHR33449">
    <property type="entry name" value="NUCLEOID-ASSOCIATED PROTEIN YBAB"/>
    <property type="match status" value="1"/>
</dbReference>
<dbReference type="PANTHER" id="PTHR33449:SF1">
    <property type="entry name" value="NUCLEOID-ASSOCIATED PROTEIN YBAB"/>
    <property type="match status" value="1"/>
</dbReference>
<dbReference type="Pfam" id="PF02575">
    <property type="entry name" value="YbaB_DNA_bd"/>
    <property type="match status" value="1"/>
</dbReference>
<dbReference type="PIRSF" id="PIRSF004555">
    <property type="entry name" value="UCP004555"/>
    <property type="match status" value="1"/>
</dbReference>
<dbReference type="SUPFAM" id="SSF82607">
    <property type="entry name" value="YbaB-like"/>
    <property type="match status" value="1"/>
</dbReference>
<name>Y2346_BURM9</name>
<reference key="1">
    <citation type="journal article" date="2010" name="Genome Biol. Evol.">
        <title>Continuing evolution of Burkholderia mallei through genome reduction and large-scale rearrangements.</title>
        <authorList>
            <person name="Losada L."/>
            <person name="Ronning C.M."/>
            <person name="DeShazer D."/>
            <person name="Woods D."/>
            <person name="Fedorova N."/>
            <person name="Kim H.S."/>
            <person name="Shabalina S.A."/>
            <person name="Pearson T.R."/>
            <person name="Brinkac L."/>
            <person name="Tan P."/>
            <person name="Nandi T."/>
            <person name="Crabtree J."/>
            <person name="Badger J."/>
            <person name="Beckstrom-Sternberg S."/>
            <person name="Saqib M."/>
            <person name="Schutzer S.E."/>
            <person name="Keim P."/>
            <person name="Nierman W.C."/>
        </authorList>
    </citation>
    <scope>NUCLEOTIDE SEQUENCE [LARGE SCALE GENOMIC DNA]</scope>
    <source>
        <strain>NCTC 10229</strain>
    </source>
</reference>
<organism>
    <name type="scientific">Burkholderia mallei (strain NCTC 10229)</name>
    <dbReference type="NCBI Taxonomy" id="412022"/>
    <lineage>
        <taxon>Bacteria</taxon>
        <taxon>Pseudomonadati</taxon>
        <taxon>Pseudomonadota</taxon>
        <taxon>Betaproteobacteria</taxon>
        <taxon>Burkholderiales</taxon>
        <taxon>Burkholderiaceae</taxon>
        <taxon>Burkholderia</taxon>
        <taxon>pseudomallei group</taxon>
    </lineage>
</organism>